<feature type="chain" id="PRO_1000195774" description="Large ribosomal subunit protein bL12">
    <location>
        <begin position="1"/>
        <end position="128"/>
    </location>
</feature>
<sequence>MALSKEEILQAIEEMKVIELHELVEAIKEKFNVTAAMPVAAVAAAPAGGAAAPAEEEKNEFDIILTGFDAAQKIALIKEVRAVSGLGLKEAKDAVEKGGETIKSGVSKEEAAAIKKQLEAAGGKVEVK</sequence>
<comment type="function">
    <text evidence="1">Forms part of the ribosomal stalk which helps the ribosome interact with GTP-bound translation factors. Is thus essential for accurate translation.</text>
</comment>
<comment type="subunit">
    <text evidence="1">Homodimer. Part of the ribosomal stalk of the 50S ribosomal subunit. Forms a multimeric L10(L12)X complex, where L10 forms an elongated spine to which 2 to 4 L12 dimers bind in a sequential fashion. Binds GTP-bound translation factors.</text>
</comment>
<comment type="similarity">
    <text evidence="1">Belongs to the bacterial ribosomal protein bL12 family.</text>
</comment>
<proteinExistence type="inferred from homology"/>
<reference key="1">
    <citation type="journal article" date="2009" name="PLoS ONE">
        <title>Genome sequence of the pathogenic intestinal spirochete Brachyspira hyodysenteriae reveals adaptations to its lifestyle in the porcine large intestine.</title>
        <authorList>
            <person name="Bellgard M.I."/>
            <person name="Wanchanthuek P."/>
            <person name="La T."/>
            <person name="Ryan K."/>
            <person name="Moolhuijzen P."/>
            <person name="Albertyn Z."/>
            <person name="Shaban B."/>
            <person name="Motro Y."/>
            <person name="Dunn D.S."/>
            <person name="Schibeci D."/>
            <person name="Hunter A."/>
            <person name="Barrero R."/>
            <person name="Phillips N.D."/>
            <person name="Hampson D.J."/>
        </authorList>
    </citation>
    <scope>NUCLEOTIDE SEQUENCE [LARGE SCALE GENOMIC DNA]</scope>
    <source>
        <strain>ATCC 49526 / WA1</strain>
    </source>
</reference>
<name>RL7_BRAHW</name>
<keyword id="KW-0687">Ribonucleoprotein</keyword>
<keyword id="KW-0689">Ribosomal protein</keyword>
<evidence type="ECO:0000255" key="1">
    <source>
        <dbReference type="HAMAP-Rule" id="MF_00368"/>
    </source>
</evidence>
<evidence type="ECO:0000305" key="2"/>
<gene>
    <name evidence="1" type="primary">rplL</name>
    <name type="ordered locus">BHWA1_02324</name>
</gene>
<protein>
    <recommendedName>
        <fullName evidence="1">Large ribosomal subunit protein bL12</fullName>
    </recommendedName>
    <alternativeName>
        <fullName evidence="2">50S ribosomal protein L7/L12</fullName>
    </alternativeName>
</protein>
<dbReference type="EMBL" id="CP001357">
    <property type="protein sequence ID" value="ACN84778.1"/>
    <property type="molecule type" value="Genomic_DNA"/>
</dbReference>
<dbReference type="RefSeq" id="WP_008728857.1">
    <property type="nucleotide sequence ID" value="NC_012225.1"/>
</dbReference>
<dbReference type="SMR" id="C0QWX5"/>
<dbReference type="STRING" id="565034.BHWA1_02324"/>
<dbReference type="GeneID" id="63963476"/>
<dbReference type="KEGG" id="bhy:BHWA1_02324"/>
<dbReference type="eggNOG" id="COG0222">
    <property type="taxonomic scope" value="Bacteria"/>
</dbReference>
<dbReference type="HOGENOM" id="CLU_086499_3_0_12"/>
<dbReference type="Proteomes" id="UP000001803">
    <property type="component" value="Chromosome"/>
</dbReference>
<dbReference type="GO" id="GO:0022625">
    <property type="term" value="C:cytosolic large ribosomal subunit"/>
    <property type="evidence" value="ECO:0007669"/>
    <property type="project" value="TreeGrafter"/>
</dbReference>
<dbReference type="GO" id="GO:0003729">
    <property type="term" value="F:mRNA binding"/>
    <property type="evidence" value="ECO:0007669"/>
    <property type="project" value="TreeGrafter"/>
</dbReference>
<dbReference type="GO" id="GO:0003735">
    <property type="term" value="F:structural constituent of ribosome"/>
    <property type="evidence" value="ECO:0007669"/>
    <property type="project" value="InterPro"/>
</dbReference>
<dbReference type="GO" id="GO:0006412">
    <property type="term" value="P:translation"/>
    <property type="evidence" value="ECO:0007669"/>
    <property type="project" value="UniProtKB-UniRule"/>
</dbReference>
<dbReference type="CDD" id="cd00387">
    <property type="entry name" value="Ribosomal_L7_L12"/>
    <property type="match status" value="1"/>
</dbReference>
<dbReference type="FunFam" id="3.30.1390.10:FF:000001">
    <property type="entry name" value="50S ribosomal protein L7/L12"/>
    <property type="match status" value="1"/>
</dbReference>
<dbReference type="Gene3D" id="3.30.1390.10">
    <property type="match status" value="1"/>
</dbReference>
<dbReference type="Gene3D" id="1.20.5.710">
    <property type="entry name" value="Single helix bin"/>
    <property type="match status" value="1"/>
</dbReference>
<dbReference type="HAMAP" id="MF_00368">
    <property type="entry name" value="Ribosomal_bL12"/>
    <property type="match status" value="1"/>
</dbReference>
<dbReference type="InterPro" id="IPR000206">
    <property type="entry name" value="Ribosomal_bL12"/>
</dbReference>
<dbReference type="InterPro" id="IPR013823">
    <property type="entry name" value="Ribosomal_bL12_C"/>
</dbReference>
<dbReference type="InterPro" id="IPR014719">
    <property type="entry name" value="Ribosomal_bL12_C/ClpS-like"/>
</dbReference>
<dbReference type="InterPro" id="IPR008932">
    <property type="entry name" value="Ribosomal_bL12_oligo"/>
</dbReference>
<dbReference type="InterPro" id="IPR036235">
    <property type="entry name" value="Ribosomal_bL12_oligo_N_sf"/>
</dbReference>
<dbReference type="NCBIfam" id="TIGR00855">
    <property type="entry name" value="L12"/>
    <property type="match status" value="1"/>
</dbReference>
<dbReference type="PANTHER" id="PTHR45987">
    <property type="entry name" value="39S RIBOSOMAL PROTEIN L12"/>
    <property type="match status" value="1"/>
</dbReference>
<dbReference type="PANTHER" id="PTHR45987:SF4">
    <property type="entry name" value="LARGE RIBOSOMAL SUBUNIT PROTEIN BL12M"/>
    <property type="match status" value="1"/>
</dbReference>
<dbReference type="Pfam" id="PF00542">
    <property type="entry name" value="Ribosomal_L12"/>
    <property type="match status" value="1"/>
</dbReference>
<dbReference type="Pfam" id="PF16320">
    <property type="entry name" value="Ribosomal_L12_N"/>
    <property type="match status" value="1"/>
</dbReference>
<dbReference type="SUPFAM" id="SSF54736">
    <property type="entry name" value="ClpS-like"/>
    <property type="match status" value="1"/>
</dbReference>
<dbReference type="SUPFAM" id="SSF48300">
    <property type="entry name" value="Ribosomal protein L7/12, oligomerisation (N-terminal) domain"/>
    <property type="match status" value="1"/>
</dbReference>
<organism>
    <name type="scientific">Brachyspira hyodysenteriae (strain ATCC 49526 / WA1)</name>
    <dbReference type="NCBI Taxonomy" id="565034"/>
    <lineage>
        <taxon>Bacteria</taxon>
        <taxon>Pseudomonadati</taxon>
        <taxon>Spirochaetota</taxon>
        <taxon>Spirochaetia</taxon>
        <taxon>Brachyspirales</taxon>
        <taxon>Brachyspiraceae</taxon>
        <taxon>Brachyspira</taxon>
    </lineage>
</organism>
<accession>C0QWX5</accession>